<name>NUOH_GRABC</name>
<gene>
    <name evidence="1" type="primary">nuoH</name>
    <name type="ordered locus">GbCGDNIH1_1295</name>
</gene>
<dbReference type="EC" id="7.1.1.-" evidence="1"/>
<dbReference type="EMBL" id="CP000394">
    <property type="protein sequence ID" value="ABI62193.1"/>
    <property type="molecule type" value="Genomic_DNA"/>
</dbReference>
<dbReference type="SMR" id="Q0BSK9"/>
<dbReference type="STRING" id="391165.GbCGDNIH1_1295"/>
<dbReference type="KEGG" id="gbe:GbCGDNIH1_1295"/>
<dbReference type="eggNOG" id="COG1005">
    <property type="taxonomic scope" value="Bacteria"/>
</dbReference>
<dbReference type="HOGENOM" id="CLU_015134_0_1_5"/>
<dbReference type="Proteomes" id="UP000001963">
    <property type="component" value="Chromosome"/>
</dbReference>
<dbReference type="GO" id="GO:0005886">
    <property type="term" value="C:plasma membrane"/>
    <property type="evidence" value="ECO:0007669"/>
    <property type="project" value="UniProtKB-SubCell"/>
</dbReference>
<dbReference type="GO" id="GO:0003954">
    <property type="term" value="F:NADH dehydrogenase activity"/>
    <property type="evidence" value="ECO:0007669"/>
    <property type="project" value="TreeGrafter"/>
</dbReference>
<dbReference type="GO" id="GO:0016655">
    <property type="term" value="F:oxidoreductase activity, acting on NAD(P)H, quinone or similar compound as acceptor"/>
    <property type="evidence" value="ECO:0007669"/>
    <property type="project" value="UniProtKB-UniRule"/>
</dbReference>
<dbReference type="GO" id="GO:0048038">
    <property type="term" value="F:quinone binding"/>
    <property type="evidence" value="ECO:0007669"/>
    <property type="project" value="UniProtKB-KW"/>
</dbReference>
<dbReference type="GO" id="GO:0009060">
    <property type="term" value="P:aerobic respiration"/>
    <property type="evidence" value="ECO:0007669"/>
    <property type="project" value="TreeGrafter"/>
</dbReference>
<dbReference type="HAMAP" id="MF_01350">
    <property type="entry name" value="NDH1_NuoH"/>
    <property type="match status" value="1"/>
</dbReference>
<dbReference type="InterPro" id="IPR001694">
    <property type="entry name" value="NADH_UbQ_OxRdtase_su1/FPO"/>
</dbReference>
<dbReference type="InterPro" id="IPR018086">
    <property type="entry name" value="NADH_UbQ_OxRdtase_su1_CS"/>
</dbReference>
<dbReference type="NCBIfam" id="NF004741">
    <property type="entry name" value="PRK06076.1-2"/>
    <property type="match status" value="1"/>
</dbReference>
<dbReference type="NCBIfam" id="NF004745">
    <property type="entry name" value="PRK06076.1-6"/>
    <property type="match status" value="1"/>
</dbReference>
<dbReference type="PANTHER" id="PTHR11432">
    <property type="entry name" value="NADH DEHYDROGENASE SUBUNIT 1"/>
    <property type="match status" value="1"/>
</dbReference>
<dbReference type="PANTHER" id="PTHR11432:SF3">
    <property type="entry name" value="NADH-UBIQUINONE OXIDOREDUCTASE CHAIN 1"/>
    <property type="match status" value="1"/>
</dbReference>
<dbReference type="Pfam" id="PF00146">
    <property type="entry name" value="NADHdh"/>
    <property type="match status" value="1"/>
</dbReference>
<dbReference type="PROSITE" id="PS00668">
    <property type="entry name" value="COMPLEX1_ND1_2"/>
    <property type="match status" value="1"/>
</dbReference>
<keyword id="KW-0997">Cell inner membrane</keyword>
<keyword id="KW-1003">Cell membrane</keyword>
<keyword id="KW-0472">Membrane</keyword>
<keyword id="KW-0520">NAD</keyword>
<keyword id="KW-0874">Quinone</keyword>
<keyword id="KW-1185">Reference proteome</keyword>
<keyword id="KW-1278">Translocase</keyword>
<keyword id="KW-0812">Transmembrane</keyword>
<keyword id="KW-1133">Transmembrane helix</keyword>
<keyword id="KW-0830">Ubiquinone</keyword>
<reference key="1">
    <citation type="journal article" date="2007" name="J. Bacteriol.">
        <title>Genome sequence analysis of the emerging human pathogenic acetic acid bacterium Granulibacter bethesdensis.</title>
        <authorList>
            <person name="Greenberg D.E."/>
            <person name="Porcella S.F."/>
            <person name="Zelazny A.M."/>
            <person name="Virtaneva K."/>
            <person name="Sturdevant D.E."/>
            <person name="Kupko J.J. III"/>
            <person name="Barbian K.D."/>
            <person name="Babar A."/>
            <person name="Dorward D.W."/>
            <person name="Holland S.M."/>
        </authorList>
    </citation>
    <scope>NUCLEOTIDE SEQUENCE [LARGE SCALE GENOMIC DNA]</scope>
    <source>
        <strain>ATCC BAA-1260 / CGDNIH1</strain>
    </source>
</reference>
<sequence length="342" mass="37661">MSGMHDFLFNTNLGLLIITALQALAILVPLMLMVAYATVFERKVLAAIGLRKGPNVVGPWGMLQAFADAGKMLLKETIIPDGANKVLFILAPLLTFILAMIAWAVVPVNDGWAVANINVGVLYLFAISSLGVYGVIIAGWASNSKYAFLGALRAAAQMVSYEVSIGFVMVAILLCVGSLNLNDVVLAQKHVWFVLPMLPMAVIFFISGLAETNRSPFDIVEGESEIVAGHMVEYSAMAYALFFLGEYANMFMICAMTTLLFLGGWLPPFDIVPLNWVPGPIWFVLKVCALMFVFFWVRGTVPRYRYDQLMRLGWKVFLPFSLVWLLLTACVLELAGWLPTVN</sequence>
<evidence type="ECO:0000255" key="1">
    <source>
        <dbReference type="HAMAP-Rule" id="MF_01350"/>
    </source>
</evidence>
<comment type="function">
    <text evidence="1">NDH-1 shuttles electrons from NADH, via FMN and iron-sulfur (Fe-S) centers, to quinones in the respiratory chain. The immediate electron acceptor for the enzyme in this species is believed to be ubiquinone. Couples the redox reaction to proton translocation (for every two electrons transferred, four hydrogen ions are translocated across the cytoplasmic membrane), and thus conserves the redox energy in a proton gradient. This subunit may bind ubiquinone.</text>
</comment>
<comment type="catalytic activity">
    <reaction evidence="1">
        <text>a quinone + NADH + 5 H(+)(in) = a quinol + NAD(+) + 4 H(+)(out)</text>
        <dbReference type="Rhea" id="RHEA:57888"/>
        <dbReference type="ChEBI" id="CHEBI:15378"/>
        <dbReference type="ChEBI" id="CHEBI:24646"/>
        <dbReference type="ChEBI" id="CHEBI:57540"/>
        <dbReference type="ChEBI" id="CHEBI:57945"/>
        <dbReference type="ChEBI" id="CHEBI:132124"/>
    </reaction>
</comment>
<comment type="subunit">
    <text evidence="1">NDH-1 is composed of 14 different subunits. Subunits NuoA, H, J, K, L, M, N constitute the membrane sector of the complex.</text>
</comment>
<comment type="subcellular location">
    <subcellularLocation>
        <location evidence="1">Cell inner membrane</location>
        <topology evidence="1">Multi-pass membrane protein</topology>
    </subcellularLocation>
</comment>
<comment type="similarity">
    <text evidence="1">Belongs to the complex I subunit 1 family.</text>
</comment>
<accession>Q0BSK9</accession>
<proteinExistence type="inferred from homology"/>
<organism>
    <name type="scientific">Granulibacter bethesdensis (strain ATCC BAA-1260 / CGDNIH1)</name>
    <dbReference type="NCBI Taxonomy" id="391165"/>
    <lineage>
        <taxon>Bacteria</taxon>
        <taxon>Pseudomonadati</taxon>
        <taxon>Pseudomonadota</taxon>
        <taxon>Alphaproteobacteria</taxon>
        <taxon>Acetobacterales</taxon>
        <taxon>Acetobacteraceae</taxon>
        <taxon>Granulibacter</taxon>
    </lineage>
</organism>
<feature type="chain" id="PRO_0000298816" description="NADH-quinone oxidoreductase subunit H">
    <location>
        <begin position="1"/>
        <end position="342"/>
    </location>
</feature>
<feature type="transmembrane region" description="Helical" evidence="1">
    <location>
        <begin position="15"/>
        <end position="35"/>
    </location>
</feature>
<feature type="transmembrane region" description="Helical" evidence="1">
    <location>
        <begin position="86"/>
        <end position="106"/>
    </location>
</feature>
<feature type="transmembrane region" description="Helical" evidence="1">
    <location>
        <begin position="119"/>
        <end position="139"/>
    </location>
</feature>
<feature type="transmembrane region" description="Helical" evidence="1">
    <location>
        <begin position="159"/>
        <end position="179"/>
    </location>
</feature>
<feature type="transmembrane region" description="Helical" evidence="1">
    <location>
        <begin position="190"/>
        <end position="210"/>
    </location>
</feature>
<feature type="transmembrane region" description="Helical" evidence="1">
    <location>
        <begin position="251"/>
        <end position="271"/>
    </location>
</feature>
<feature type="transmembrane region" description="Helical" evidence="1">
    <location>
        <begin position="277"/>
        <end position="297"/>
    </location>
</feature>
<feature type="transmembrane region" description="Helical" evidence="1">
    <location>
        <begin position="316"/>
        <end position="336"/>
    </location>
</feature>
<protein>
    <recommendedName>
        <fullName evidence="1">NADH-quinone oxidoreductase subunit H</fullName>
        <ecNumber evidence="1">7.1.1.-</ecNumber>
    </recommendedName>
    <alternativeName>
        <fullName evidence="1">NADH dehydrogenase I subunit H</fullName>
    </alternativeName>
    <alternativeName>
        <fullName evidence="1">NDH-1 subunit H</fullName>
    </alternativeName>
</protein>